<sequence>MNHIYKLKSYGIGTDRRFYGVANKTLETPDFLDPVRESFDWFLHVGIPEAFDRIFPIVSANGKLEISFRRGSLRVEKPENEYLAIREAKIKGKTYSARVYVTLVKVHSEDGEMEEQEILLAEFPFMTQGGTFIINGFEKVVVSQLIRSPGVCFRENVRNQQADDLFNKVEIIPQLGSWMEIFHKVTGNQVDTVKFRIDKHKNIPLLSFLRAIGFTNETVRKYFGNSPELLESIRRHKLESLEENLELIYRIVRKDDRITEEGLKNLIPSIIFNERRYNLASTGRFMLNAKLNLVERISQTYLAEDLVSKKNKILFKKGTYITRQLALEIQEKFNNEEIPLSEIEGVDSTIYARQLEITRNENLWKRFYVAIVKVWPNKKSMLQESEPVNVIATDPNLNEKTLVLSDIIAIVSYYFNLLSNLGKSDDPDSLVNKRIVSVGELLQNQFLIALTKIEKNSKEKISTKSDLSQLTVKSIINNKPIYNQFKNFFNSSKLSQFMDQINPLGEMASKRKVTSLGPGGLNRDTAQFEVRDVHTTHYGRICPVETPEGQNIGLILNFSVFSRINQYGFIITPYYQVKNRIVDYSKVHWLAASEEFDKSFAQSGVEIDQNNRIIPDKLTVRKNQTYLVLDAEQVNYIDVSSMQMTSISASAIPFLENNDANRALMGSNMQRQAVPLIKSEAPLVATGIEEAVARFSATNLRASISGKVTYVDAKKIIIDDGEKPEIHYLRYFEKSNQETLILQKPTVKVGDKVKKGQLICDGPSTDNGELALGKNVLVAFSTWYGYNYEDAIIISEKLVKDDVFTSIHIQEQTIKFRSTKAGNDILTAEIPNASAKSRLHLDANGIVIVGSEVDTGDILVGRTSPKGEDNPTAEEKLMAAIWGKKALAQKDTSLRVKNGEGGTVIDVQILSRDQGDNLEEGVGMLIKILIAQKRKIKVGDKMAGRHGNKGVVSVILPVEDMPFLEDGTPVDIVLNPQGVPSRMNIGQVLELHLGMVAKKLKTKFVTPVFDGIKIETIKKLFDEANIPESGKFKLFDGISGQPFENPVSVGYMYMLKLLHMVDDKMHARSIGPYSLTTQQPLGGKSQNGGQRFGEMETWALESFGATSVLSELLTYKSDNIQGRNLLYNNIISGGKIPSPGTPESFNVLAYELRGLLIKLEVHKNDQENQEVEEIKDPLELPEIPSNFIDEYNQDGRIELNKLEEFADFDEENIDFDKLTR</sequence>
<organism>
    <name type="scientific">Mesomycoplasma hyopneumoniae (strain J / ATCC 25934 / NCTC 10110)</name>
    <name type="common">Mycoplasma hyopneumoniae</name>
    <dbReference type="NCBI Taxonomy" id="262719"/>
    <lineage>
        <taxon>Bacteria</taxon>
        <taxon>Bacillati</taxon>
        <taxon>Mycoplasmatota</taxon>
        <taxon>Mycoplasmoidales</taxon>
        <taxon>Metamycoplasmataceae</taxon>
        <taxon>Mesomycoplasma</taxon>
    </lineage>
</organism>
<comment type="function">
    <text evidence="1">DNA-dependent RNA polymerase catalyzes the transcription of DNA into RNA using the four ribonucleoside triphosphates as substrates.</text>
</comment>
<comment type="catalytic activity">
    <reaction evidence="1">
        <text>RNA(n) + a ribonucleoside 5'-triphosphate = RNA(n+1) + diphosphate</text>
        <dbReference type="Rhea" id="RHEA:21248"/>
        <dbReference type="Rhea" id="RHEA-COMP:14527"/>
        <dbReference type="Rhea" id="RHEA-COMP:17342"/>
        <dbReference type="ChEBI" id="CHEBI:33019"/>
        <dbReference type="ChEBI" id="CHEBI:61557"/>
        <dbReference type="ChEBI" id="CHEBI:140395"/>
        <dbReference type="EC" id="2.7.7.6"/>
    </reaction>
</comment>
<comment type="subunit">
    <text evidence="1">The RNAP catalytic core consists of 2 alpha, 1 beta, 1 beta' and 1 omega subunit. When a sigma factor is associated with the core the holoenzyme is formed, which can initiate transcription.</text>
</comment>
<comment type="similarity">
    <text evidence="1">Belongs to the RNA polymerase beta chain family.</text>
</comment>
<dbReference type="EC" id="2.7.7.6" evidence="1"/>
<dbReference type="EMBL" id="AE017243">
    <property type="protein sequence ID" value="AAZ44702.1"/>
    <property type="molecule type" value="Genomic_DNA"/>
</dbReference>
<dbReference type="RefSeq" id="WP_011284347.1">
    <property type="nucleotide sequence ID" value="NC_007295.1"/>
</dbReference>
<dbReference type="SMR" id="Q4A969"/>
<dbReference type="GeneID" id="41334920"/>
<dbReference type="KEGG" id="mhj:MHJ_0618"/>
<dbReference type="eggNOG" id="COG0085">
    <property type="taxonomic scope" value="Bacteria"/>
</dbReference>
<dbReference type="HOGENOM" id="CLU_000524_4_1_14"/>
<dbReference type="OrthoDB" id="9803954at2"/>
<dbReference type="Proteomes" id="UP000000548">
    <property type="component" value="Chromosome"/>
</dbReference>
<dbReference type="GO" id="GO:0000428">
    <property type="term" value="C:DNA-directed RNA polymerase complex"/>
    <property type="evidence" value="ECO:0007669"/>
    <property type="project" value="UniProtKB-KW"/>
</dbReference>
<dbReference type="GO" id="GO:0003677">
    <property type="term" value="F:DNA binding"/>
    <property type="evidence" value="ECO:0007669"/>
    <property type="project" value="UniProtKB-UniRule"/>
</dbReference>
<dbReference type="GO" id="GO:0003899">
    <property type="term" value="F:DNA-directed RNA polymerase activity"/>
    <property type="evidence" value="ECO:0007669"/>
    <property type="project" value="UniProtKB-UniRule"/>
</dbReference>
<dbReference type="GO" id="GO:0032549">
    <property type="term" value="F:ribonucleoside binding"/>
    <property type="evidence" value="ECO:0007669"/>
    <property type="project" value="InterPro"/>
</dbReference>
<dbReference type="GO" id="GO:0006351">
    <property type="term" value="P:DNA-templated transcription"/>
    <property type="evidence" value="ECO:0007669"/>
    <property type="project" value="UniProtKB-UniRule"/>
</dbReference>
<dbReference type="CDD" id="cd12797">
    <property type="entry name" value="M23_peptidase"/>
    <property type="match status" value="1"/>
</dbReference>
<dbReference type="CDD" id="cd00653">
    <property type="entry name" value="RNA_pol_B_RPB2"/>
    <property type="match status" value="1"/>
</dbReference>
<dbReference type="Gene3D" id="2.40.50.100">
    <property type="match status" value="1"/>
</dbReference>
<dbReference type="Gene3D" id="2.40.50.150">
    <property type="match status" value="1"/>
</dbReference>
<dbReference type="Gene3D" id="3.90.1100.10">
    <property type="match status" value="2"/>
</dbReference>
<dbReference type="Gene3D" id="2.30.150.10">
    <property type="entry name" value="DNA-directed RNA polymerase, beta subunit, external 1 domain"/>
    <property type="match status" value="1"/>
</dbReference>
<dbReference type="Gene3D" id="2.40.270.10">
    <property type="entry name" value="DNA-directed RNA polymerase, subunit 2, domain 6"/>
    <property type="match status" value="2"/>
</dbReference>
<dbReference type="Gene3D" id="3.90.1800.10">
    <property type="entry name" value="RNA polymerase alpha subunit dimerisation domain"/>
    <property type="match status" value="1"/>
</dbReference>
<dbReference type="Gene3D" id="3.90.1110.10">
    <property type="entry name" value="RNA polymerase Rpb2, domain 2"/>
    <property type="match status" value="2"/>
</dbReference>
<dbReference type="HAMAP" id="MF_01321">
    <property type="entry name" value="RNApol_bact_RpoB"/>
    <property type="match status" value="1"/>
</dbReference>
<dbReference type="InterPro" id="IPR042107">
    <property type="entry name" value="DNA-dir_RNA_pol_bsu_ext_1_sf"/>
</dbReference>
<dbReference type="InterPro" id="IPR019462">
    <property type="entry name" value="DNA-dir_RNA_pol_bsu_external_1"/>
</dbReference>
<dbReference type="InterPro" id="IPR015712">
    <property type="entry name" value="DNA-dir_RNA_pol_su2"/>
</dbReference>
<dbReference type="InterPro" id="IPR007120">
    <property type="entry name" value="DNA-dir_RNAP_su2_dom"/>
</dbReference>
<dbReference type="InterPro" id="IPR037033">
    <property type="entry name" value="DNA-dir_RNAP_su2_hyb_sf"/>
</dbReference>
<dbReference type="InterPro" id="IPR010243">
    <property type="entry name" value="RNA_pol_bsu_bac"/>
</dbReference>
<dbReference type="InterPro" id="IPR007121">
    <property type="entry name" value="RNA_pol_bsu_CS"/>
</dbReference>
<dbReference type="InterPro" id="IPR007644">
    <property type="entry name" value="RNA_pol_bsu_protrusion"/>
</dbReference>
<dbReference type="InterPro" id="IPR007642">
    <property type="entry name" value="RNA_pol_Rpb2_2"/>
</dbReference>
<dbReference type="InterPro" id="IPR037034">
    <property type="entry name" value="RNA_pol_Rpb2_2_sf"/>
</dbReference>
<dbReference type="InterPro" id="IPR007645">
    <property type="entry name" value="RNA_pol_Rpb2_3"/>
</dbReference>
<dbReference type="InterPro" id="IPR007641">
    <property type="entry name" value="RNA_pol_Rpb2_7"/>
</dbReference>
<dbReference type="InterPro" id="IPR014724">
    <property type="entry name" value="RNA_pol_RPB2_OB-fold"/>
</dbReference>
<dbReference type="NCBIfam" id="NF001616">
    <property type="entry name" value="PRK00405.1"/>
    <property type="match status" value="1"/>
</dbReference>
<dbReference type="PANTHER" id="PTHR20856">
    <property type="entry name" value="DNA-DIRECTED RNA POLYMERASE I SUBUNIT 2"/>
    <property type="match status" value="1"/>
</dbReference>
<dbReference type="Pfam" id="PF04563">
    <property type="entry name" value="RNA_pol_Rpb2_1"/>
    <property type="match status" value="1"/>
</dbReference>
<dbReference type="Pfam" id="PF04561">
    <property type="entry name" value="RNA_pol_Rpb2_2"/>
    <property type="match status" value="1"/>
</dbReference>
<dbReference type="Pfam" id="PF04565">
    <property type="entry name" value="RNA_pol_Rpb2_3"/>
    <property type="match status" value="1"/>
</dbReference>
<dbReference type="Pfam" id="PF10385">
    <property type="entry name" value="RNA_pol_Rpb2_45"/>
    <property type="match status" value="1"/>
</dbReference>
<dbReference type="Pfam" id="PF00562">
    <property type="entry name" value="RNA_pol_Rpb2_6"/>
    <property type="match status" value="1"/>
</dbReference>
<dbReference type="Pfam" id="PF04560">
    <property type="entry name" value="RNA_pol_Rpb2_7"/>
    <property type="match status" value="1"/>
</dbReference>
<dbReference type="SUPFAM" id="SSF64484">
    <property type="entry name" value="beta and beta-prime subunits of DNA dependent RNA-polymerase"/>
    <property type="match status" value="1"/>
</dbReference>
<dbReference type="PROSITE" id="PS01166">
    <property type="entry name" value="RNA_POL_BETA"/>
    <property type="match status" value="1"/>
</dbReference>
<keyword id="KW-0240">DNA-directed RNA polymerase</keyword>
<keyword id="KW-0548">Nucleotidyltransferase</keyword>
<keyword id="KW-0804">Transcription</keyword>
<keyword id="KW-0808">Transferase</keyword>
<accession>Q4A969</accession>
<name>RPOB_MESHJ</name>
<evidence type="ECO:0000255" key="1">
    <source>
        <dbReference type="HAMAP-Rule" id="MF_01321"/>
    </source>
</evidence>
<feature type="chain" id="PRO_0000224077" description="DNA-directed RNA polymerase subunit beta">
    <location>
        <begin position="1"/>
        <end position="1220"/>
    </location>
</feature>
<protein>
    <recommendedName>
        <fullName evidence="1">DNA-directed RNA polymerase subunit beta</fullName>
        <shortName evidence="1">RNAP subunit beta</shortName>
        <ecNumber evidence="1">2.7.7.6</ecNumber>
    </recommendedName>
    <alternativeName>
        <fullName evidence="1">RNA polymerase subunit beta</fullName>
    </alternativeName>
    <alternativeName>
        <fullName evidence="1">Transcriptase subunit beta</fullName>
    </alternativeName>
</protein>
<reference key="1">
    <citation type="journal article" date="2005" name="J. Bacteriol.">
        <title>Swine and poultry pathogens: the complete genome sequences of two strains of Mycoplasma hyopneumoniae and a strain of Mycoplasma synoviae.</title>
        <authorList>
            <person name="Vasconcelos A.T.R."/>
            <person name="Ferreira H.B."/>
            <person name="Bizarro C.V."/>
            <person name="Bonatto S.L."/>
            <person name="Carvalho M.O."/>
            <person name="Pinto P.M."/>
            <person name="Almeida D.F."/>
            <person name="Almeida L.G.P."/>
            <person name="Almeida R."/>
            <person name="Alves-Junior L."/>
            <person name="Assuncao E.N."/>
            <person name="Azevedo V.A.C."/>
            <person name="Bogo M.R."/>
            <person name="Brigido M.M."/>
            <person name="Brocchi M."/>
            <person name="Burity H.A."/>
            <person name="Camargo A.A."/>
            <person name="Camargo S.S."/>
            <person name="Carepo M.S."/>
            <person name="Carraro D.M."/>
            <person name="de Mattos Cascardo J.C."/>
            <person name="Castro L.A."/>
            <person name="Cavalcanti G."/>
            <person name="Chemale G."/>
            <person name="Collevatti R.G."/>
            <person name="Cunha C.W."/>
            <person name="Dallagiovanna B."/>
            <person name="Dambros B.P."/>
            <person name="Dellagostin O.A."/>
            <person name="Falcao C."/>
            <person name="Fantinatti-Garboggini F."/>
            <person name="Felipe M.S.S."/>
            <person name="Fiorentin L."/>
            <person name="Franco G.R."/>
            <person name="Freitas N.S.A."/>
            <person name="Frias D."/>
            <person name="Grangeiro T.B."/>
            <person name="Grisard E.C."/>
            <person name="Guimaraes C.T."/>
            <person name="Hungria M."/>
            <person name="Jardim S.N."/>
            <person name="Krieger M.A."/>
            <person name="Laurino J.P."/>
            <person name="Lima L.F.A."/>
            <person name="Lopes M.I."/>
            <person name="Loreto E.L.S."/>
            <person name="Madeira H.M.F."/>
            <person name="Manfio G.P."/>
            <person name="Maranhao A.Q."/>
            <person name="Martinkovics C.T."/>
            <person name="Medeiros S.R.B."/>
            <person name="Moreira M.A.M."/>
            <person name="Neiva M."/>
            <person name="Ramalho-Neto C.E."/>
            <person name="Nicolas M.F."/>
            <person name="Oliveira S.C."/>
            <person name="Paixao R.F.C."/>
            <person name="Pedrosa F.O."/>
            <person name="Pena S.D.J."/>
            <person name="Pereira M."/>
            <person name="Pereira-Ferrari L."/>
            <person name="Piffer I."/>
            <person name="Pinto L.S."/>
            <person name="Potrich D.P."/>
            <person name="Salim A.C.M."/>
            <person name="Santos F.R."/>
            <person name="Schmitt R."/>
            <person name="Schneider M.P.C."/>
            <person name="Schrank A."/>
            <person name="Schrank I.S."/>
            <person name="Schuck A.F."/>
            <person name="Seuanez H.N."/>
            <person name="Silva D.W."/>
            <person name="Silva R."/>
            <person name="Silva S.C."/>
            <person name="Soares C.M.A."/>
            <person name="Souza K.R.L."/>
            <person name="Souza R.C."/>
            <person name="Staats C.C."/>
            <person name="Steffens M.B.R."/>
            <person name="Teixeira S.M.R."/>
            <person name="Urmenyi T.P."/>
            <person name="Vainstein M.H."/>
            <person name="Zuccherato L.W."/>
            <person name="Simpson A.J.G."/>
            <person name="Zaha A."/>
        </authorList>
    </citation>
    <scope>NUCLEOTIDE SEQUENCE [LARGE SCALE GENOMIC DNA]</scope>
    <source>
        <strain>J / ATCC 25934 / NCTC 10110</strain>
    </source>
</reference>
<proteinExistence type="inferred from homology"/>
<gene>
    <name evidence="1" type="primary">rpoB</name>
    <name type="ordered locus">MHJ_0618</name>
</gene>